<name>Y4837_ARATH</name>
<reference key="1">
    <citation type="journal article" date="1999" name="Nature">
        <title>Sequence and analysis of chromosome 4 of the plant Arabidopsis thaliana.</title>
        <authorList>
            <person name="Mayer K.F.X."/>
            <person name="Schueller C."/>
            <person name="Wambutt R."/>
            <person name="Murphy G."/>
            <person name="Volckaert G."/>
            <person name="Pohl T."/>
            <person name="Duesterhoeft A."/>
            <person name="Stiekema W."/>
            <person name="Entian K.-D."/>
            <person name="Terryn N."/>
            <person name="Harris B."/>
            <person name="Ansorge W."/>
            <person name="Brandt P."/>
            <person name="Grivell L.A."/>
            <person name="Rieger M."/>
            <person name="Weichselgartner M."/>
            <person name="de Simone V."/>
            <person name="Obermaier B."/>
            <person name="Mache R."/>
            <person name="Mueller M."/>
            <person name="Kreis M."/>
            <person name="Delseny M."/>
            <person name="Puigdomenech P."/>
            <person name="Watson M."/>
            <person name="Schmidtheini T."/>
            <person name="Reichert B."/>
            <person name="Portetelle D."/>
            <person name="Perez-Alonso M."/>
            <person name="Boutry M."/>
            <person name="Bancroft I."/>
            <person name="Vos P."/>
            <person name="Hoheisel J."/>
            <person name="Zimmermann W."/>
            <person name="Wedler H."/>
            <person name="Ridley P."/>
            <person name="Langham S.-A."/>
            <person name="McCullagh B."/>
            <person name="Bilham L."/>
            <person name="Robben J."/>
            <person name="van der Schueren J."/>
            <person name="Grymonprez B."/>
            <person name="Chuang Y.-J."/>
            <person name="Vandenbussche F."/>
            <person name="Braeken M."/>
            <person name="Weltjens I."/>
            <person name="Voet M."/>
            <person name="Bastiaens I."/>
            <person name="Aert R."/>
            <person name="Defoor E."/>
            <person name="Weitzenegger T."/>
            <person name="Bothe G."/>
            <person name="Ramsperger U."/>
            <person name="Hilbert H."/>
            <person name="Braun M."/>
            <person name="Holzer E."/>
            <person name="Brandt A."/>
            <person name="Peters S."/>
            <person name="van Staveren M."/>
            <person name="Dirkse W."/>
            <person name="Mooijman P."/>
            <person name="Klein Lankhorst R."/>
            <person name="Rose M."/>
            <person name="Hauf J."/>
            <person name="Koetter P."/>
            <person name="Berneiser S."/>
            <person name="Hempel S."/>
            <person name="Feldpausch M."/>
            <person name="Lamberth S."/>
            <person name="Van den Daele H."/>
            <person name="De Keyser A."/>
            <person name="Buysshaert C."/>
            <person name="Gielen J."/>
            <person name="Villarroel R."/>
            <person name="De Clercq R."/>
            <person name="van Montagu M."/>
            <person name="Rogers J."/>
            <person name="Cronin A."/>
            <person name="Quail M.A."/>
            <person name="Bray-Allen S."/>
            <person name="Clark L."/>
            <person name="Doggett J."/>
            <person name="Hall S."/>
            <person name="Kay M."/>
            <person name="Lennard N."/>
            <person name="McLay K."/>
            <person name="Mayes R."/>
            <person name="Pettett A."/>
            <person name="Rajandream M.A."/>
            <person name="Lyne M."/>
            <person name="Benes V."/>
            <person name="Rechmann S."/>
            <person name="Borkova D."/>
            <person name="Bloecker H."/>
            <person name="Scharfe M."/>
            <person name="Grimm M."/>
            <person name="Loehnert T.-H."/>
            <person name="Dose S."/>
            <person name="de Haan M."/>
            <person name="Maarse A.C."/>
            <person name="Schaefer M."/>
            <person name="Mueller-Auer S."/>
            <person name="Gabel C."/>
            <person name="Fuchs M."/>
            <person name="Fartmann B."/>
            <person name="Granderath K."/>
            <person name="Dauner D."/>
            <person name="Herzl A."/>
            <person name="Neumann S."/>
            <person name="Argiriou A."/>
            <person name="Vitale D."/>
            <person name="Liguori R."/>
            <person name="Piravandi E."/>
            <person name="Massenet O."/>
            <person name="Quigley F."/>
            <person name="Clabauld G."/>
            <person name="Muendlein A."/>
            <person name="Felber R."/>
            <person name="Schnabl S."/>
            <person name="Hiller R."/>
            <person name="Schmidt W."/>
            <person name="Lecharny A."/>
            <person name="Aubourg S."/>
            <person name="Chefdor F."/>
            <person name="Cooke R."/>
            <person name="Berger C."/>
            <person name="Monfort A."/>
            <person name="Casacuberta E."/>
            <person name="Gibbons T."/>
            <person name="Weber N."/>
            <person name="Vandenbol M."/>
            <person name="Bargues M."/>
            <person name="Terol J."/>
            <person name="Torres A."/>
            <person name="Perez-Perez A."/>
            <person name="Purnelle B."/>
            <person name="Bent E."/>
            <person name="Johnson S."/>
            <person name="Tacon D."/>
            <person name="Jesse T."/>
            <person name="Heijnen L."/>
            <person name="Schwarz S."/>
            <person name="Scholler P."/>
            <person name="Heber S."/>
            <person name="Francs P."/>
            <person name="Bielke C."/>
            <person name="Frishman D."/>
            <person name="Haase D."/>
            <person name="Lemcke K."/>
            <person name="Mewes H.-W."/>
            <person name="Stocker S."/>
            <person name="Zaccaria P."/>
            <person name="Bevan M."/>
            <person name="Wilson R.K."/>
            <person name="de la Bastide M."/>
            <person name="Habermann K."/>
            <person name="Parnell L."/>
            <person name="Dedhia N."/>
            <person name="Gnoj L."/>
            <person name="Schutz K."/>
            <person name="Huang E."/>
            <person name="Spiegel L."/>
            <person name="Sekhon M."/>
            <person name="Murray J."/>
            <person name="Sheet P."/>
            <person name="Cordes M."/>
            <person name="Abu-Threideh J."/>
            <person name="Stoneking T."/>
            <person name="Kalicki J."/>
            <person name="Graves T."/>
            <person name="Harmon G."/>
            <person name="Edwards J."/>
            <person name="Latreille P."/>
            <person name="Courtney L."/>
            <person name="Cloud J."/>
            <person name="Abbott A."/>
            <person name="Scott K."/>
            <person name="Johnson D."/>
            <person name="Minx P."/>
            <person name="Bentley D."/>
            <person name="Fulton B."/>
            <person name="Miller N."/>
            <person name="Greco T."/>
            <person name="Kemp K."/>
            <person name="Kramer J."/>
            <person name="Fulton L."/>
            <person name="Mardis E."/>
            <person name="Dante M."/>
            <person name="Pepin K."/>
            <person name="Hillier L.W."/>
            <person name="Nelson J."/>
            <person name="Spieth J."/>
            <person name="Ryan E."/>
            <person name="Andrews S."/>
            <person name="Geisel C."/>
            <person name="Layman D."/>
            <person name="Du H."/>
            <person name="Ali J."/>
            <person name="Berghoff A."/>
            <person name="Jones K."/>
            <person name="Drone K."/>
            <person name="Cotton M."/>
            <person name="Joshu C."/>
            <person name="Antonoiu B."/>
            <person name="Zidanic M."/>
            <person name="Strong C."/>
            <person name="Sun H."/>
            <person name="Lamar B."/>
            <person name="Yordan C."/>
            <person name="Ma P."/>
            <person name="Zhong J."/>
            <person name="Preston R."/>
            <person name="Vil D."/>
            <person name="Shekher M."/>
            <person name="Matero A."/>
            <person name="Shah R."/>
            <person name="Swaby I.K."/>
            <person name="O'Shaughnessy A."/>
            <person name="Rodriguez M."/>
            <person name="Hoffman J."/>
            <person name="Till S."/>
            <person name="Granat S."/>
            <person name="Shohdy N."/>
            <person name="Hasegawa A."/>
            <person name="Hameed A."/>
            <person name="Lodhi M."/>
            <person name="Johnson A."/>
            <person name="Chen E."/>
            <person name="Marra M.A."/>
            <person name="Martienssen R."/>
            <person name="McCombie W.R."/>
        </authorList>
    </citation>
    <scope>NUCLEOTIDE SEQUENCE [LARGE SCALE GENOMIC DNA]</scope>
    <source>
        <strain>cv. Columbia</strain>
    </source>
</reference>
<reference key="2">
    <citation type="journal article" date="2017" name="Plant J.">
        <title>Araport11: a complete reannotation of the Arabidopsis thaliana reference genome.</title>
        <authorList>
            <person name="Cheng C.Y."/>
            <person name="Krishnakumar V."/>
            <person name="Chan A.P."/>
            <person name="Thibaud-Nissen F."/>
            <person name="Schobel S."/>
            <person name="Town C.D."/>
        </authorList>
    </citation>
    <scope>GENOME REANNOTATION</scope>
    <source>
        <strain>cv. Columbia</strain>
    </source>
</reference>
<reference key="3">
    <citation type="journal article" date="2003" name="Science">
        <title>Empirical analysis of transcriptional activity in the Arabidopsis genome.</title>
        <authorList>
            <person name="Yamada K."/>
            <person name="Lim J."/>
            <person name="Dale J.M."/>
            <person name="Chen H."/>
            <person name="Shinn P."/>
            <person name="Palm C.J."/>
            <person name="Southwick A.M."/>
            <person name="Wu H.C."/>
            <person name="Kim C.J."/>
            <person name="Nguyen M."/>
            <person name="Pham P.K."/>
            <person name="Cheuk R.F."/>
            <person name="Karlin-Newmann G."/>
            <person name="Liu S.X."/>
            <person name="Lam B."/>
            <person name="Sakano H."/>
            <person name="Wu T."/>
            <person name="Yu G."/>
            <person name="Miranda M."/>
            <person name="Quach H.L."/>
            <person name="Tripp M."/>
            <person name="Chang C.H."/>
            <person name="Lee J.M."/>
            <person name="Toriumi M.J."/>
            <person name="Chan M.M."/>
            <person name="Tang C.C."/>
            <person name="Onodera C.S."/>
            <person name="Deng J.M."/>
            <person name="Akiyama K."/>
            <person name="Ansari Y."/>
            <person name="Arakawa T."/>
            <person name="Banh J."/>
            <person name="Banno F."/>
            <person name="Bowser L."/>
            <person name="Brooks S.Y."/>
            <person name="Carninci P."/>
            <person name="Chao Q."/>
            <person name="Choy N."/>
            <person name="Enju A."/>
            <person name="Goldsmith A.D."/>
            <person name="Gurjal M."/>
            <person name="Hansen N.F."/>
            <person name="Hayashizaki Y."/>
            <person name="Johnson-Hopson C."/>
            <person name="Hsuan V.W."/>
            <person name="Iida K."/>
            <person name="Karnes M."/>
            <person name="Khan S."/>
            <person name="Koesema E."/>
            <person name="Ishida J."/>
            <person name="Jiang P.X."/>
            <person name="Jones T."/>
            <person name="Kawai J."/>
            <person name="Kamiya A."/>
            <person name="Meyers C."/>
            <person name="Nakajima M."/>
            <person name="Narusaka M."/>
            <person name="Seki M."/>
            <person name="Sakurai T."/>
            <person name="Satou M."/>
            <person name="Tamse R."/>
            <person name="Vaysberg M."/>
            <person name="Wallender E.K."/>
            <person name="Wong C."/>
            <person name="Yamamura Y."/>
            <person name="Yuan S."/>
            <person name="Shinozaki K."/>
            <person name="Davis R.W."/>
            <person name="Theologis A."/>
            <person name="Ecker J.R."/>
        </authorList>
    </citation>
    <scope>NUCLEOTIDE SEQUENCE [LARGE SCALE MRNA] (ISOFORMS 1 AND 2)</scope>
    <source>
        <strain>cv. Columbia</strain>
    </source>
</reference>
<organism>
    <name type="scientific">Arabidopsis thaliana</name>
    <name type="common">Mouse-ear cress</name>
    <dbReference type="NCBI Taxonomy" id="3702"/>
    <lineage>
        <taxon>Eukaryota</taxon>
        <taxon>Viridiplantae</taxon>
        <taxon>Streptophyta</taxon>
        <taxon>Embryophyta</taxon>
        <taxon>Tracheophyta</taxon>
        <taxon>Spermatophyta</taxon>
        <taxon>Magnoliopsida</taxon>
        <taxon>eudicotyledons</taxon>
        <taxon>Gunneridae</taxon>
        <taxon>Pentapetalae</taxon>
        <taxon>rosids</taxon>
        <taxon>malvids</taxon>
        <taxon>Brassicales</taxon>
        <taxon>Brassicaceae</taxon>
        <taxon>Camelineae</taxon>
        <taxon>Arabidopsis</taxon>
    </lineage>
</organism>
<keyword id="KW-0025">Alternative splicing</keyword>
<keyword id="KW-0539">Nucleus</keyword>
<keyword id="KW-1185">Reference proteome</keyword>
<keyword id="KW-0677">Repeat</keyword>
<keyword id="KW-0694">RNA-binding</keyword>
<feature type="chain" id="PRO_0000050164" description="KH domain-containing protein At4g18375">
    <location>
        <begin position="1"/>
        <end position="606"/>
    </location>
</feature>
<feature type="domain" description="KH 1" evidence="1">
    <location>
        <begin position="35"/>
        <end position="99"/>
    </location>
</feature>
<feature type="domain" description="KH 2" evidence="1">
    <location>
        <begin position="138"/>
        <end position="210"/>
    </location>
</feature>
<feature type="domain" description="KH 3" evidence="1">
    <location>
        <begin position="311"/>
        <end position="380"/>
    </location>
</feature>
<feature type="domain" description="KH 4" evidence="1">
    <location>
        <begin position="394"/>
        <end position="455"/>
    </location>
</feature>
<feature type="domain" description="KH 5" evidence="1">
    <location>
        <begin position="535"/>
        <end position="599"/>
    </location>
</feature>
<feature type="region of interest" description="Disordered" evidence="2">
    <location>
        <begin position="1"/>
        <end position="26"/>
    </location>
</feature>
<feature type="compositionally biased region" description="Basic residues" evidence="2">
    <location>
        <begin position="1"/>
        <end position="10"/>
    </location>
</feature>
<feature type="splice variant" id="VSP_008899" description="In isoform 2." evidence="3">
    <original>L</original>
    <variation>F</variation>
    <location>
        <position position="532"/>
    </location>
</feature>
<feature type="splice variant" id="VSP_008900" description="In isoform 2." evidence="3">
    <location>
        <begin position="533"/>
        <end position="606"/>
    </location>
</feature>
<accession>P58223</accession>
<accession>O49507</accession>
<accession>Q8H0Y7</accession>
<dbReference type="EMBL" id="AL021710">
    <property type="protein sequence ID" value="CAA16717.1"/>
    <property type="status" value="ALT_SEQ"/>
    <property type="molecule type" value="Genomic_DNA"/>
</dbReference>
<dbReference type="EMBL" id="AL161548">
    <property type="protein sequence ID" value="CAB78839.1"/>
    <property type="status" value="ALT_SEQ"/>
    <property type="molecule type" value="Genomic_DNA"/>
</dbReference>
<dbReference type="EMBL" id="CP002687">
    <property type="protein sequence ID" value="AEE84036.1"/>
    <property type="molecule type" value="Genomic_DNA"/>
</dbReference>
<dbReference type="EMBL" id="AY133701">
    <property type="protein sequence ID" value="AAM91635.1"/>
    <property type="molecule type" value="mRNA"/>
</dbReference>
<dbReference type="EMBL" id="BT001108">
    <property type="protein sequence ID" value="AAN64172.1"/>
    <property type="molecule type" value="mRNA"/>
</dbReference>
<dbReference type="RefSeq" id="NP_193572.1">
    <molecule id="P58223-1"/>
    <property type="nucleotide sequence ID" value="NM_117948.5"/>
</dbReference>
<dbReference type="SMR" id="P58223"/>
<dbReference type="FunCoup" id="P58223">
    <property type="interactions" value="1242"/>
</dbReference>
<dbReference type="STRING" id="3702.P58223"/>
<dbReference type="MEROPS" id="S01.441"/>
<dbReference type="PaxDb" id="3702-AT4G18375.2"/>
<dbReference type="ProteomicsDB" id="242886">
    <molecule id="P58223-1"/>
</dbReference>
<dbReference type="EnsemblPlants" id="AT4G18375.2">
    <molecule id="P58223-1"/>
    <property type="protein sequence ID" value="AT4G18375.2"/>
    <property type="gene ID" value="AT4G18375"/>
</dbReference>
<dbReference type="GeneID" id="827566"/>
<dbReference type="Gramene" id="AT4G18375.2">
    <molecule id="P58223-1"/>
    <property type="protein sequence ID" value="AT4G18375.2"/>
    <property type="gene ID" value="AT4G18375"/>
</dbReference>
<dbReference type="KEGG" id="ath:AT4G18375"/>
<dbReference type="Araport" id="AT4G18375"/>
<dbReference type="TAIR" id="AT4G18375"/>
<dbReference type="eggNOG" id="KOG2190">
    <property type="taxonomic scope" value="Eukaryota"/>
</dbReference>
<dbReference type="HOGENOM" id="CLU_018025_0_0_1"/>
<dbReference type="InParanoid" id="P58223"/>
<dbReference type="PhylomeDB" id="P58223"/>
<dbReference type="PRO" id="PR:P58223"/>
<dbReference type="Proteomes" id="UP000006548">
    <property type="component" value="Chromosome 4"/>
</dbReference>
<dbReference type="ExpressionAtlas" id="P58223">
    <property type="expression patterns" value="baseline and differential"/>
</dbReference>
<dbReference type="GO" id="GO:0005634">
    <property type="term" value="C:nucleus"/>
    <property type="evidence" value="ECO:0007669"/>
    <property type="project" value="UniProtKB-SubCell"/>
</dbReference>
<dbReference type="GO" id="GO:0003723">
    <property type="term" value="F:RNA binding"/>
    <property type="evidence" value="ECO:0007669"/>
    <property type="project" value="UniProtKB-KW"/>
</dbReference>
<dbReference type="CDD" id="cd22462">
    <property type="entry name" value="KH-I_HEN4_like_rpt5"/>
    <property type="match status" value="1"/>
</dbReference>
<dbReference type="CDD" id="cd22459">
    <property type="entry name" value="KH-I_PEPPER_rpt1_like"/>
    <property type="match status" value="2"/>
</dbReference>
<dbReference type="Gene3D" id="3.30.1370.10">
    <property type="entry name" value="K Homology domain, type 1"/>
    <property type="match status" value="5"/>
</dbReference>
<dbReference type="InterPro" id="IPR004087">
    <property type="entry name" value="KH_dom"/>
</dbReference>
<dbReference type="InterPro" id="IPR004088">
    <property type="entry name" value="KH_dom_type_1"/>
</dbReference>
<dbReference type="InterPro" id="IPR036612">
    <property type="entry name" value="KH_dom_type_1_sf"/>
</dbReference>
<dbReference type="PANTHER" id="PTHR10288">
    <property type="entry name" value="KH DOMAIN CONTAINING RNA BINDING PROTEIN"/>
    <property type="match status" value="1"/>
</dbReference>
<dbReference type="Pfam" id="PF00013">
    <property type="entry name" value="KH_1"/>
    <property type="match status" value="5"/>
</dbReference>
<dbReference type="SMART" id="SM00322">
    <property type="entry name" value="KH"/>
    <property type="match status" value="5"/>
</dbReference>
<dbReference type="SUPFAM" id="SSF54791">
    <property type="entry name" value="Eukaryotic type KH-domain (KH-domain type I)"/>
    <property type="match status" value="5"/>
</dbReference>
<dbReference type="PROSITE" id="PS50084">
    <property type="entry name" value="KH_TYPE_1"/>
    <property type="match status" value="5"/>
</dbReference>
<evidence type="ECO:0000255" key="1">
    <source>
        <dbReference type="PROSITE-ProRule" id="PRU00117"/>
    </source>
</evidence>
<evidence type="ECO:0000256" key="2">
    <source>
        <dbReference type="SAM" id="MobiDB-lite"/>
    </source>
</evidence>
<evidence type="ECO:0000303" key="3">
    <source>
    </source>
</evidence>
<evidence type="ECO:0000305" key="4"/>
<comment type="subcellular location">
    <subcellularLocation>
        <location evidence="4">Nucleus</location>
    </subcellularLocation>
</comment>
<comment type="alternative products">
    <event type="alternative splicing"/>
    <isoform>
        <id>P58223-1</id>
        <name>1</name>
        <sequence type="displayed"/>
    </isoform>
    <isoform>
        <id>P58223-2</id>
        <name>2</name>
        <sequence type="described" ref="VSP_008899 VSP_008900"/>
    </isoform>
</comment>
<comment type="miscellaneous">
    <molecule>Isoform 2</molecule>
    <text evidence="4">May be due to a competing acceptor site.</text>
</comment>
<comment type="sequence caution" evidence="4">
    <conflict type="erroneous gene model prediction">
        <sequence resource="EMBL-CDS" id="CAA16717"/>
    </conflict>
    <text>The predicted gene At4g18370 has been split into 2 genes: At4g18375 and At4g18370.</text>
</comment>
<comment type="sequence caution" evidence="4">
    <conflict type="erroneous gene model prediction">
        <sequence resource="EMBL-CDS" id="CAB78839"/>
    </conflict>
    <text>The predicted gene At4g18370 has been split into 2 genes: At4g18375 and At4g18370.</text>
</comment>
<protein>
    <recommendedName>
        <fullName>KH domain-containing protein At4g18375</fullName>
    </recommendedName>
</protein>
<gene>
    <name type="ordered locus">At4g18375</name>
    <name type="ORF">F28J12.2</name>
</gene>
<sequence>MVERKKRKQIQRNNSESNRNQKRRISHDKINRDELVVYRILCPIDVVGGVIGKSGKVINAIRHNTKAKIKVFDQLHGCSQRVITIYCSVKEKQEEIGFTKSENEPLCCAQDALLKVYDAIVASDEENNTKTNVDRDDNKECRLLVPFSQSSSLIGKAGENIKRIRRRTRASVKVVSKDVSDPSHVCAMEYDNVVVISGEPESVKQALFAVSAIMYKINPRENIPLDSTSQDVPAASVIVPSDLSNSVYPQTGFYSNQDHILQQGAGVPSYFNALSVSDFQGYAETAANPVPVFASSLPVTHGFGGSSRSEELVFKVLCPLCNIMRVIGKGGSTIKRIREASGSCIEVNDSRTKCGDDECVIIVTATESPDDMKSMAVEAVLLLQEYINDEDAENVKMQLLVSSKVIGCVIGKSGSVINEIRKRTNANICISKGKKDDLVEVSGEVSSVRDALIQIVLRLREDVLGDKDSVATRKPPARTDNCSFLSGSSNAGYTLPSFMSSMASTSGFHGYGSFPAGDNVLGSTGPYSYGRLPSSSALEILIPAHAMSKVMGKGGGNLENIRRISGAMIEISASKTSHGDHIALLSGTLEQMRCAENLVQAFVMST</sequence>
<proteinExistence type="evidence at transcript level"/>